<name>Y091_METJA</name>
<proteinExistence type="evidence at protein level"/>
<reference key="1">
    <citation type="journal article" date="1996" name="Science">
        <title>Complete genome sequence of the methanogenic archaeon, Methanococcus jannaschii.</title>
        <authorList>
            <person name="Bult C.J."/>
            <person name="White O."/>
            <person name="Olsen G.J."/>
            <person name="Zhou L."/>
            <person name="Fleischmann R.D."/>
            <person name="Sutton G.G."/>
            <person name="Blake J.A."/>
            <person name="FitzGerald L.M."/>
            <person name="Clayton R.A."/>
            <person name="Gocayne J.D."/>
            <person name="Kerlavage A.R."/>
            <person name="Dougherty B.A."/>
            <person name="Tomb J.-F."/>
            <person name="Adams M.D."/>
            <person name="Reich C.I."/>
            <person name="Overbeek R."/>
            <person name="Kirkness E.F."/>
            <person name="Weinstock K.G."/>
            <person name="Merrick J.M."/>
            <person name="Glodek A."/>
            <person name="Scott J.L."/>
            <person name="Geoghagen N.S.M."/>
            <person name="Weidman J.F."/>
            <person name="Fuhrmann J.L."/>
            <person name="Nguyen D."/>
            <person name="Utterback T.R."/>
            <person name="Kelley J.M."/>
            <person name="Peterson J.D."/>
            <person name="Sadow P.W."/>
            <person name="Hanna M.C."/>
            <person name="Cotton M.D."/>
            <person name="Roberts K.M."/>
            <person name="Hurst M.A."/>
            <person name="Kaine B.P."/>
            <person name="Borodovsky M."/>
            <person name="Klenk H.-P."/>
            <person name="Fraser C.M."/>
            <person name="Smith H.O."/>
            <person name="Woese C.R."/>
            <person name="Venter J.C."/>
        </authorList>
    </citation>
    <scope>NUCLEOTIDE SEQUENCE [LARGE SCALE GENOMIC DNA]</scope>
    <source>
        <strain>ATCC 43067 / DSM 2661 / JAL-1 / JCM 10045 / NBRC 100440</strain>
    </source>
</reference>
<accession>Q57556</accession>
<keyword id="KW-0002">3D-structure</keyword>
<keyword id="KW-1003">Cell membrane</keyword>
<keyword id="KW-0472">Membrane</keyword>
<keyword id="KW-1185">Reference proteome</keyword>
<keyword id="KW-0812">Transmembrane</keyword>
<keyword id="KW-1133">Transmembrane helix</keyword>
<comment type="subcellular location">
    <subcellularLocation>
        <location evidence="2">Cell membrane</location>
        <topology evidence="2">Multi-pass membrane protein</topology>
    </subcellularLocation>
</comment>
<comment type="similarity">
    <text evidence="2">Belongs to the Ca(2+):cation antiporter (CaCA) (TC 2.A.19) family.</text>
</comment>
<sequence>MLILGVGYFLLGLILLYYGSDWFVLGSERIARHFNVSNFVIGATVMAIGTSLPEILTSAYASYMHAPGISIGNAIGSCICNIGLVLGLSAIISPIIVDKNLQKNILVYLLFVIFAAVIGIDGFSWIDGVVLLILFIIYLRWTVKNGSAEIEENNDKNNPSVVFSLVLLIIGLIGVLVGAELFVDGAKKIALALDISDKVIGFTLVAFGTSLPELMVSLAAAKRNLGGMVLGNVIGSNIADIGGALAVGSLFMHLPAENVQMAVLVIMSLLLYLFAKYSKIGRWQGILFLALYIIAIASLRMG</sequence>
<dbReference type="EMBL" id="L77117">
    <property type="protein sequence ID" value="AAB98072.1"/>
    <property type="molecule type" value="Genomic_DNA"/>
</dbReference>
<dbReference type="PIR" id="C64311">
    <property type="entry name" value="C64311"/>
</dbReference>
<dbReference type="RefSeq" id="WP_010869583.1">
    <property type="nucleotide sequence ID" value="NC_000909.1"/>
</dbReference>
<dbReference type="PDB" id="3V5S">
    <property type="method" value="X-ray"/>
    <property type="resolution" value="3.50 A"/>
    <property type="chains" value="A=1-302"/>
</dbReference>
<dbReference type="PDB" id="3V5U">
    <property type="method" value="X-ray"/>
    <property type="resolution" value="1.90 A"/>
    <property type="chains" value="A=1-302"/>
</dbReference>
<dbReference type="PDB" id="5HWX">
    <property type="method" value="X-ray"/>
    <property type="resolution" value="2.40 A"/>
    <property type="chains" value="A=1-301"/>
</dbReference>
<dbReference type="PDB" id="5HWY">
    <property type="method" value="X-ray"/>
    <property type="resolution" value="2.10 A"/>
    <property type="chains" value="A=1-300"/>
</dbReference>
<dbReference type="PDB" id="5HXC">
    <property type="method" value="X-ray"/>
    <property type="resolution" value="2.10 A"/>
    <property type="chains" value="A=1-302"/>
</dbReference>
<dbReference type="PDB" id="5HXE">
    <property type="method" value="X-ray"/>
    <property type="resolution" value="2.29 A"/>
    <property type="chains" value="A=1-302"/>
</dbReference>
<dbReference type="PDB" id="5HXH">
    <property type="method" value="X-ray"/>
    <property type="resolution" value="2.80 A"/>
    <property type="chains" value="A/B=1-300"/>
</dbReference>
<dbReference type="PDB" id="5HXR">
    <property type="method" value="X-ray"/>
    <property type="resolution" value="2.46 A"/>
    <property type="chains" value="A=1-300"/>
</dbReference>
<dbReference type="PDB" id="5HXS">
    <property type="method" value="X-ray"/>
    <property type="resolution" value="2.79 A"/>
    <property type="chains" value="A=1-300"/>
</dbReference>
<dbReference type="PDB" id="5HYA">
    <property type="method" value="X-ray"/>
    <property type="resolution" value="1.90 A"/>
    <property type="chains" value="A=1-302"/>
</dbReference>
<dbReference type="PDB" id="5JDF">
    <property type="method" value="X-ray"/>
    <property type="resolution" value="2.65 A"/>
    <property type="chains" value="A=1-302"/>
</dbReference>
<dbReference type="PDB" id="5JDG">
    <property type="method" value="X-ray"/>
    <property type="resolution" value="2.41 A"/>
    <property type="chains" value="A=1-302"/>
</dbReference>
<dbReference type="PDB" id="5JDH">
    <property type="method" value="X-ray"/>
    <property type="resolution" value="2.20 A"/>
    <property type="chains" value="A=1-301"/>
</dbReference>
<dbReference type="PDB" id="5JDL">
    <property type="method" value="X-ray"/>
    <property type="resolution" value="2.90 A"/>
    <property type="chains" value="A=1-301"/>
</dbReference>
<dbReference type="PDB" id="5JDM">
    <property type="method" value="X-ray"/>
    <property type="resolution" value="2.56 A"/>
    <property type="chains" value="A=1-302"/>
</dbReference>
<dbReference type="PDB" id="5JDN">
    <property type="method" value="X-ray"/>
    <property type="resolution" value="2.30 A"/>
    <property type="chains" value="A=1-302"/>
</dbReference>
<dbReference type="PDB" id="5JDQ">
    <property type="method" value="X-ray"/>
    <property type="resolution" value="2.50 A"/>
    <property type="chains" value="A=1-302"/>
</dbReference>
<dbReference type="PDBsum" id="3V5S"/>
<dbReference type="PDBsum" id="3V5U"/>
<dbReference type="PDBsum" id="5HWX"/>
<dbReference type="PDBsum" id="5HWY"/>
<dbReference type="PDBsum" id="5HXC"/>
<dbReference type="PDBsum" id="5HXE"/>
<dbReference type="PDBsum" id="5HXH"/>
<dbReference type="PDBsum" id="5HXR"/>
<dbReference type="PDBsum" id="5HXS"/>
<dbReference type="PDBsum" id="5HYA"/>
<dbReference type="PDBsum" id="5JDF"/>
<dbReference type="PDBsum" id="5JDG"/>
<dbReference type="PDBsum" id="5JDH"/>
<dbReference type="PDBsum" id="5JDL"/>
<dbReference type="PDBsum" id="5JDM"/>
<dbReference type="PDBsum" id="5JDN"/>
<dbReference type="PDBsum" id="5JDQ"/>
<dbReference type="SMR" id="Q57556"/>
<dbReference type="FunCoup" id="Q57556">
    <property type="interactions" value="26"/>
</dbReference>
<dbReference type="STRING" id="243232.MJ_0091"/>
<dbReference type="TCDB" id="2.A.19.5.3">
    <property type="family name" value="the ca(2+):cation antiporter (caca) family"/>
</dbReference>
<dbReference type="PaxDb" id="243232-MJ_0091"/>
<dbReference type="DNASU" id="1450930"/>
<dbReference type="EnsemblBacteria" id="AAB98072">
    <property type="protein sequence ID" value="AAB98072"/>
    <property type="gene ID" value="MJ_0091"/>
</dbReference>
<dbReference type="GeneID" id="1450930"/>
<dbReference type="KEGG" id="mja:MJ_0091"/>
<dbReference type="eggNOG" id="arCOG02881">
    <property type="taxonomic scope" value="Archaea"/>
</dbReference>
<dbReference type="HOGENOM" id="CLU_007948_0_1_2"/>
<dbReference type="InParanoid" id="Q57556"/>
<dbReference type="OrthoDB" id="142185at2157"/>
<dbReference type="PhylomeDB" id="Q57556"/>
<dbReference type="EvolutionaryTrace" id="Q57556"/>
<dbReference type="Proteomes" id="UP000000805">
    <property type="component" value="Chromosome"/>
</dbReference>
<dbReference type="GO" id="GO:0005886">
    <property type="term" value="C:plasma membrane"/>
    <property type="evidence" value="ECO:0000318"/>
    <property type="project" value="GO_Central"/>
</dbReference>
<dbReference type="GO" id="GO:0005262">
    <property type="term" value="F:calcium channel activity"/>
    <property type="evidence" value="ECO:0000318"/>
    <property type="project" value="GO_Central"/>
</dbReference>
<dbReference type="GO" id="GO:0008273">
    <property type="term" value="F:calcium, potassium:sodium antiporter activity"/>
    <property type="evidence" value="ECO:0000318"/>
    <property type="project" value="GO_Central"/>
</dbReference>
<dbReference type="GO" id="GO:0070588">
    <property type="term" value="P:calcium ion transmembrane transport"/>
    <property type="evidence" value="ECO:0000318"/>
    <property type="project" value="GO_Central"/>
</dbReference>
<dbReference type="GO" id="GO:0006874">
    <property type="term" value="P:intracellular calcium ion homeostasis"/>
    <property type="evidence" value="ECO:0000318"/>
    <property type="project" value="GO_Central"/>
</dbReference>
<dbReference type="Gene3D" id="1.20.1420.30">
    <property type="entry name" value="NCX, central ion-binding region"/>
    <property type="match status" value="1"/>
</dbReference>
<dbReference type="InterPro" id="IPR004481">
    <property type="entry name" value="K/Na/Ca-exchanger"/>
</dbReference>
<dbReference type="InterPro" id="IPR004837">
    <property type="entry name" value="NaCa_Exmemb"/>
</dbReference>
<dbReference type="InterPro" id="IPR044880">
    <property type="entry name" value="NCX_ion-bd_dom_sf"/>
</dbReference>
<dbReference type="NCBIfam" id="TIGR00367">
    <property type="entry name" value="calcium/sodium antiporter"/>
    <property type="match status" value="1"/>
</dbReference>
<dbReference type="PANTHER" id="PTHR10846:SF8">
    <property type="entry name" value="INNER MEMBRANE PROTEIN YRBG"/>
    <property type="match status" value="1"/>
</dbReference>
<dbReference type="PANTHER" id="PTHR10846">
    <property type="entry name" value="SODIUM/POTASSIUM/CALCIUM EXCHANGER"/>
    <property type="match status" value="1"/>
</dbReference>
<dbReference type="Pfam" id="PF01699">
    <property type="entry name" value="Na_Ca_ex"/>
    <property type="match status" value="2"/>
</dbReference>
<feature type="chain" id="PRO_0000209509" description="Uncharacterized membrane protein MJ0091">
    <location>
        <begin position="1"/>
        <end position="302"/>
    </location>
</feature>
<feature type="transmembrane region" description="Helical" evidence="1">
    <location>
        <begin position="3"/>
        <end position="23"/>
    </location>
</feature>
<feature type="transmembrane region" description="Helical" evidence="1">
    <location>
        <begin position="39"/>
        <end position="59"/>
    </location>
</feature>
<feature type="transmembrane region" description="Helical" evidence="1">
    <location>
        <begin position="77"/>
        <end position="97"/>
    </location>
</feature>
<feature type="transmembrane region" description="Helical" evidence="1">
    <location>
        <begin position="106"/>
        <end position="126"/>
    </location>
</feature>
<feature type="transmembrane region" description="Helical" evidence="1">
    <location>
        <begin position="128"/>
        <end position="148"/>
    </location>
</feature>
<feature type="transmembrane region" description="Helical" evidence="1">
    <location>
        <begin position="163"/>
        <end position="183"/>
    </location>
</feature>
<feature type="transmembrane region" description="Helical" evidence="1">
    <location>
        <begin position="199"/>
        <end position="219"/>
    </location>
</feature>
<feature type="transmembrane region" description="Helical" evidence="1">
    <location>
        <begin position="227"/>
        <end position="247"/>
    </location>
</feature>
<feature type="transmembrane region" description="Helical" evidence="1">
    <location>
        <begin position="254"/>
        <end position="274"/>
    </location>
</feature>
<feature type="helix" evidence="4">
    <location>
        <begin position="2"/>
        <end position="33"/>
    </location>
</feature>
<feature type="helix" evidence="4">
    <location>
        <begin position="38"/>
        <end position="43"/>
    </location>
</feature>
<feature type="helix" evidence="4">
    <location>
        <begin position="45"/>
        <end position="63"/>
    </location>
</feature>
<feature type="helix" evidence="4">
    <location>
        <begin position="67"/>
        <end position="83"/>
    </location>
</feature>
<feature type="helix" evidence="4">
    <location>
        <begin position="85"/>
        <end position="92"/>
    </location>
</feature>
<feature type="helix" evidence="4">
    <location>
        <begin position="99"/>
        <end position="118"/>
    </location>
</feature>
<feature type="turn" evidence="4">
    <location>
        <begin position="119"/>
        <end position="121"/>
    </location>
</feature>
<feature type="helix" evidence="4">
    <location>
        <begin position="125"/>
        <end position="145"/>
    </location>
</feature>
<feature type="helix" evidence="3">
    <location>
        <begin position="153"/>
        <end position="155"/>
    </location>
</feature>
<feature type="helix" evidence="4">
    <location>
        <begin position="159"/>
        <end position="192"/>
    </location>
</feature>
<feature type="helix" evidence="4">
    <location>
        <begin position="198"/>
        <end position="203"/>
    </location>
</feature>
<feature type="helix" evidence="4">
    <location>
        <begin position="205"/>
        <end position="209"/>
    </location>
</feature>
<feature type="helix" evidence="4">
    <location>
        <begin position="211"/>
        <end position="222"/>
    </location>
</feature>
<feature type="helix" evidence="4">
    <location>
        <begin position="226"/>
        <end position="242"/>
    </location>
</feature>
<feature type="helix" evidence="4">
    <location>
        <begin position="244"/>
        <end position="251"/>
    </location>
</feature>
<feature type="helix" evidence="4">
    <location>
        <begin position="258"/>
        <end position="277"/>
    </location>
</feature>
<feature type="helix" evidence="4">
    <location>
        <begin position="282"/>
        <end position="298"/>
    </location>
</feature>
<gene>
    <name type="ordered locus">MJ0091</name>
</gene>
<evidence type="ECO:0000255" key="1"/>
<evidence type="ECO:0000305" key="2"/>
<evidence type="ECO:0007829" key="3">
    <source>
        <dbReference type="PDB" id="5HWY"/>
    </source>
</evidence>
<evidence type="ECO:0007829" key="4">
    <source>
        <dbReference type="PDB" id="5HYA"/>
    </source>
</evidence>
<organism>
    <name type="scientific">Methanocaldococcus jannaschii (strain ATCC 43067 / DSM 2661 / JAL-1 / JCM 10045 / NBRC 100440)</name>
    <name type="common">Methanococcus jannaschii</name>
    <dbReference type="NCBI Taxonomy" id="243232"/>
    <lineage>
        <taxon>Archaea</taxon>
        <taxon>Methanobacteriati</taxon>
        <taxon>Methanobacteriota</taxon>
        <taxon>Methanomada group</taxon>
        <taxon>Methanococci</taxon>
        <taxon>Methanococcales</taxon>
        <taxon>Methanocaldococcaceae</taxon>
        <taxon>Methanocaldococcus</taxon>
    </lineage>
</organism>
<protein>
    <recommendedName>
        <fullName>Uncharacterized membrane protein MJ0091</fullName>
    </recommendedName>
</protein>